<reference key="1">
    <citation type="journal article" date="2007" name="PLoS ONE">
        <title>Analysis of the neurotoxin complex genes in Clostridium botulinum A1-A4 and B1 strains: BoNT/A3, /Ba4 and /B1 clusters are located within plasmids.</title>
        <authorList>
            <person name="Smith T.J."/>
            <person name="Hill K.K."/>
            <person name="Foley B.T."/>
            <person name="Detter J.C."/>
            <person name="Munk A.C."/>
            <person name="Bruce D.C."/>
            <person name="Doggett N.A."/>
            <person name="Smith L.A."/>
            <person name="Marks J.D."/>
            <person name="Xie G."/>
            <person name="Brettin T.S."/>
        </authorList>
    </citation>
    <scope>NUCLEOTIDE SEQUENCE [LARGE SCALE GENOMIC DNA]</scope>
    <source>
        <strain>Loch Maree / Type A3</strain>
    </source>
</reference>
<proteinExistence type="inferred from homology"/>
<dbReference type="EMBL" id="CP000962">
    <property type="protein sequence ID" value="ACA55464.1"/>
    <property type="molecule type" value="Genomic_DNA"/>
</dbReference>
<dbReference type="RefSeq" id="WP_003494932.1">
    <property type="nucleotide sequence ID" value="NC_010520.1"/>
</dbReference>
<dbReference type="SMR" id="B1KSL4"/>
<dbReference type="GeneID" id="92940239"/>
<dbReference type="KEGG" id="cbl:CLK_2913"/>
<dbReference type="HOGENOM" id="CLU_093315_2_3_9"/>
<dbReference type="GO" id="GO:1990904">
    <property type="term" value="C:ribonucleoprotein complex"/>
    <property type="evidence" value="ECO:0007669"/>
    <property type="project" value="UniProtKB-KW"/>
</dbReference>
<dbReference type="GO" id="GO:0005840">
    <property type="term" value="C:ribosome"/>
    <property type="evidence" value="ECO:0007669"/>
    <property type="project" value="UniProtKB-KW"/>
</dbReference>
<dbReference type="GO" id="GO:0019843">
    <property type="term" value="F:rRNA binding"/>
    <property type="evidence" value="ECO:0007669"/>
    <property type="project" value="UniProtKB-UniRule"/>
</dbReference>
<dbReference type="GO" id="GO:0003735">
    <property type="term" value="F:structural constituent of ribosome"/>
    <property type="evidence" value="ECO:0007669"/>
    <property type="project" value="InterPro"/>
</dbReference>
<dbReference type="GO" id="GO:0006412">
    <property type="term" value="P:translation"/>
    <property type="evidence" value="ECO:0007669"/>
    <property type="project" value="UniProtKB-UniRule"/>
</dbReference>
<dbReference type="CDD" id="cd06089">
    <property type="entry name" value="KOW_RPL26"/>
    <property type="match status" value="1"/>
</dbReference>
<dbReference type="FunFam" id="2.30.30.30:FF:000004">
    <property type="entry name" value="50S ribosomal protein L24"/>
    <property type="match status" value="1"/>
</dbReference>
<dbReference type="Gene3D" id="2.30.30.30">
    <property type="match status" value="1"/>
</dbReference>
<dbReference type="HAMAP" id="MF_01326_B">
    <property type="entry name" value="Ribosomal_uL24_B"/>
    <property type="match status" value="1"/>
</dbReference>
<dbReference type="InterPro" id="IPR005824">
    <property type="entry name" value="KOW"/>
</dbReference>
<dbReference type="InterPro" id="IPR014722">
    <property type="entry name" value="Rib_uL2_dom2"/>
</dbReference>
<dbReference type="InterPro" id="IPR003256">
    <property type="entry name" value="Ribosomal_uL24"/>
</dbReference>
<dbReference type="InterPro" id="IPR041988">
    <property type="entry name" value="Ribosomal_uL24_KOW"/>
</dbReference>
<dbReference type="InterPro" id="IPR008991">
    <property type="entry name" value="Translation_prot_SH3-like_sf"/>
</dbReference>
<dbReference type="NCBIfam" id="TIGR01079">
    <property type="entry name" value="rplX_bact"/>
    <property type="match status" value="1"/>
</dbReference>
<dbReference type="PANTHER" id="PTHR12903">
    <property type="entry name" value="MITOCHONDRIAL RIBOSOMAL PROTEIN L24"/>
    <property type="match status" value="1"/>
</dbReference>
<dbReference type="Pfam" id="PF00467">
    <property type="entry name" value="KOW"/>
    <property type="match status" value="1"/>
</dbReference>
<dbReference type="Pfam" id="PF17136">
    <property type="entry name" value="ribosomal_L24"/>
    <property type="match status" value="1"/>
</dbReference>
<dbReference type="SMART" id="SM00739">
    <property type="entry name" value="KOW"/>
    <property type="match status" value="1"/>
</dbReference>
<dbReference type="SUPFAM" id="SSF50104">
    <property type="entry name" value="Translation proteins SH3-like domain"/>
    <property type="match status" value="1"/>
</dbReference>
<accession>B1KSL4</accession>
<sequence length="105" mass="11679">MSKIHVRKKDTVVVISGKDKGKIGEVLSVLPKKGKVIVKDVNVVTKHQKPNRENMQGGIIHKEAPIFSSKVMLYCDKCKSATRISNKILEDGTKVRVCKKCGETF</sequence>
<organism>
    <name type="scientific">Clostridium botulinum (strain Loch Maree / Type A3)</name>
    <dbReference type="NCBI Taxonomy" id="498214"/>
    <lineage>
        <taxon>Bacteria</taxon>
        <taxon>Bacillati</taxon>
        <taxon>Bacillota</taxon>
        <taxon>Clostridia</taxon>
        <taxon>Eubacteriales</taxon>
        <taxon>Clostridiaceae</taxon>
        <taxon>Clostridium</taxon>
    </lineage>
</organism>
<keyword id="KW-0687">Ribonucleoprotein</keyword>
<keyword id="KW-0689">Ribosomal protein</keyword>
<keyword id="KW-0694">RNA-binding</keyword>
<keyword id="KW-0699">rRNA-binding</keyword>
<comment type="function">
    <text evidence="1">One of two assembly initiator proteins, it binds directly to the 5'-end of the 23S rRNA, where it nucleates assembly of the 50S subunit.</text>
</comment>
<comment type="function">
    <text evidence="1">One of the proteins that surrounds the polypeptide exit tunnel on the outside of the subunit.</text>
</comment>
<comment type="subunit">
    <text evidence="1">Part of the 50S ribosomal subunit.</text>
</comment>
<comment type="similarity">
    <text evidence="1">Belongs to the universal ribosomal protein uL24 family.</text>
</comment>
<name>RL24_CLOBM</name>
<evidence type="ECO:0000255" key="1">
    <source>
        <dbReference type="HAMAP-Rule" id="MF_01326"/>
    </source>
</evidence>
<evidence type="ECO:0000305" key="2"/>
<protein>
    <recommendedName>
        <fullName evidence="1">Large ribosomal subunit protein uL24</fullName>
    </recommendedName>
    <alternativeName>
        <fullName evidence="2">50S ribosomal protein L24</fullName>
    </alternativeName>
</protein>
<feature type="chain" id="PRO_0000355662" description="Large ribosomal subunit protein uL24">
    <location>
        <begin position="1"/>
        <end position="105"/>
    </location>
</feature>
<gene>
    <name evidence="1" type="primary">rplX</name>
    <name type="ordered locus">CLK_2913</name>
</gene>